<accession>Q0K6Y9</accession>
<feature type="chain" id="PRO_1000066484" description="Orotidine 5'-phosphate decarboxylase">
    <location>
        <begin position="1"/>
        <end position="272"/>
    </location>
</feature>
<feature type="active site" description="Proton donor" evidence="1">
    <location>
        <position position="95"/>
    </location>
</feature>
<gene>
    <name evidence="1" type="primary">pyrF</name>
    <name type="ordered locus">H16_A3157</name>
</gene>
<sequence>MTFTEQLAAAWQRNDSLLCVGLDPDPQKLPLSLTGAGGAIFSFCREIVDATADLVCAFKPQIAYFHSQRAEDQLEQLIHYIHDAHPGIPVILDAKRGDIGSTAEHYALEAFERYHADAVTVSPYMGFDSMQPYLAYPDRGVIVLCRTSNPGGSDVQFLQVDGKPLYQLVAEAARERWNTTGQMGLVVGATFPNEIARVRQIVGDMPLLIPGIGAQGGDIEATVKAGRTADGTGMMINSSRAILYASREKDFAAAARNVALQTRETINRYRHG</sequence>
<proteinExistence type="inferred from homology"/>
<evidence type="ECO:0000255" key="1">
    <source>
        <dbReference type="HAMAP-Rule" id="MF_01215"/>
    </source>
</evidence>
<comment type="catalytic activity">
    <reaction evidence="1">
        <text>orotidine 5'-phosphate + H(+) = UMP + CO2</text>
        <dbReference type="Rhea" id="RHEA:11596"/>
        <dbReference type="ChEBI" id="CHEBI:15378"/>
        <dbReference type="ChEBI" id="CHEBI:16526"/>
        <dbReference type="ChEBI" id="CHEBI:57538"/>
        <dbReference type="ChEBI" id="CHEBI:57865"/>
        <dbReference type="EC" id="4.1.1.23"/>
    </reaction>
</comment>
<comment type="pathway">
    <text evidence="1">Pyrimidine metabolism; UMP biosynthesis via de novo pathway; UMP from orotate: step 2/2.</text>
</comment>
<comment type="similarity">
    <text evidence="1">Belongs to the OMP decarboxylase family. Type 2 subfamily.</text>
</comment>
<keyword id="KW-0210">Decarboxylase</keyword>
<keyword id="KW-0456">Lyase</keyword>
<keyword id="KW-0665">Pyrimidine biosynthesis</keyword>
<keyword id="KW-1185">Reference proteome</keyword>
<protein>
    <recommendedName>
        <fullName evidence="1">Orotidine 5'-phosphate decarboxylase</fullName>
        <ecNumber evidence="1">4.1.1.23</ecNumber>
    </recommendedName>
    <alternativeName>
        <fullName evidence="1">OMP decarboxylase</fullName>
        <shortName evidence="1">OMPDCase</shortName>
        <shortName evidence="1">OMPdecase</shortName>
    </alternativeName>
</protein>
<organism>
    <name type="scientific">Cupriavidus necator (strain ATCC 17699 / DSM 428 / KCTC 22496 / NCIMB 10442 / H16 / Stanier 337)</name>
    <name type="common">Ralstonia eutropha</name>
    <dbReference type="NCBI Taxonomy" id="381666"/>
    <lineage>
        <taxon>Bacteria</taxon>
        <taxon>Pseudomonadati</taxon>
        <taxon>Pseudomonadota</taxon>
        <taxon>Betaproteobacteria</taxon>
        <taxon>Burkholderiales</taxon>
        <taxon>Burkholderiaceae</taxon>
        <taxon>Cupriavidus</taxon>
    </lineage>
</organism>
<reference key="1">
    <citation type="journal article" date="2006" name="Nat. Biotechnol.">
        <title>Genome sequence of the bioplastic-producing 'Knallgas' bacterium Ralstonia eutropha H16.</title>
        <authorList>
            <person name="Pohlmann A."/>
            <person name="Fricke W.F."/>
            <person name="Reinecke F."/>
            <person name="Kusian B."/>
            <person name="Liesegang H."/>
            <person name="Cramm R."/>
            <person name="Eitinger T."/>
            <person name="Ewering C."/>
            <person name="Poetter M."/>
            <person name="Schwartz E."/>
            <person name="Strittmatter A."/>
            <person name="Voss I."/>
            <person name="Gottschalk G."/>
            <person name="Steinbuechel A."/>
            <person name="Friedrich B."/>
            <person name="Bowien B."/>
        </authorList>
    </citation>
    <scope>NUCLEOTIDE SEQUENCE [LARGE SCALE GENOMIC DNA]</scope>
    <source>
        <strain>ATCC 17699 / DSM 428 / KCTC 22496 / NCIMB 10442 / H16 / Stanier 337</strain>
    </source>
</reference>
<name>PYRF_CUPNH</name>
<dbReference type="EC" id="4.1.1.23" evidence="1"/>
<dbReference type="EMBL" id="AM260479">
    <property type="protein sequence ID" value="CAJ94232.1"/>
    <property type="molecule type" value="Genomic_DNA"/>
</dbReference>
<dbReference type="RefSeq" id="WP_010813198.1">
    <property type="nucleotide sequence ID" value="NZ_CP039287.1"/>
</dbReference>
<dbReference type="SMR" id="Q0K6Y9"/>
<dbReference type="STRING" id="381666.H16_A3157"/>
<dbReference type="KEGG" id="reh:H16_A3157"/>
<dbReference type="eggNOG" id="COG0284">
    <property type="taxonomic scope" value="Bacteria"/>
</dbReference>
<dbReference type="HOGENOM" id="CLU_060704_1_0_4"/>
<dbReference type="OrthoDB" id="9808470at2"/>
<dbReference type="UniPathway" id="UPA00070">
    <property type="reaction ID" value="UER00120"/>
</dbReference>
<dbReference type="Proteomes" id="UP000008210">
    <property type="component" value="Chromosome 1"/>
</dbReference>
<dbReference type="GO" id="GO:0004590">
    <property type="term" value="F:orotidine-5'-phosphate decarboxylase activity"/>
    <property type="evidence" value="ECO:0007669"/>
    <property type="project" value="UniProtKB-UniRule"/>
</dbReference>
<dbReference type="GO" id="GO:0006207">
    <property type="term" value="P:'de novo' pyrimidine nucleobase biosynthetic process"/>
    <property type="evidence" value="ECO:0007669"/>
    <property type="project" value="InterPro"/>
</dbReference>
<dbReference type="GO" id="GO:0044205">
    <property type="term" value="P:'de novo' UMP biosynthetic process"/>
    <property type="evidence" value="ECO:0007669"/>
    <property type="project" value="UniProtKB-UniRule"/>
</dbReference>
<dbReference type="CDD" id="cd04725">
    <property type="entry name" value="OMP_decarboxylase_like"/>
    <property type="match status" value="1"/>
</dbReference>
<dbReference type="Gene3D" id="3.20.20.70">
    <property type="entry name" value="Aldolase class I"/>
    <property type="match status" value="1"/>
</dbReference>
<dbReference type="HAMAP" id="MF_01215">
    <property type="entry name" value="OMPdecase_type2"/>
    <property type="match status" value="1"/>
</dbReference>
<dbReference type="InterPro" id="IPR013785">
    <property type="entry name" value="Aldolase_TIM"/>
</dbReference>
<dbReference type="InterPro" id="IPR018089">
    <property type="entry name" value="OMPdecase_AS"/>
</dbReference>
<dbReference type="InterPro" id="IPR011995">
    <property type="entry name" value="OMPdecase_type-2"/>
</dbReference>
<dbReference type="InterPro" id="IPR001754">
    <property type="entry name" value="OMPdeCOase_dom"/>
</dbReference>
<dbReference type="InterPro" id="IPR011060">
    <property type="entry name" value="RibuloseP-bd_barrel"/>
</dbReference>
<dbReference type="NCBIfam" id="TIGR02127">
    <property type="entry name" value="pyrF_sub2"/>
    <property type="match status" value="1"/>
</dbReference>
<dbReference type="PANTHER" id="PTHR43375">
    <property type="entry name" value="OROTIDINE 5'-PHOSPHATE DECARBOXYLASE"/>
    <property type="match status" value="1"/>
</dbReference>
<dbReference type="PANTHER" id="PTHR43375:SF1">
    <property type="entry name" value="OROTIDINE 5'-PHOSPHATE DECARBOXYLASE"/>
    <property type="match status" value="1"/>
</dbReference>
<dbReference type="Pfam" id="PF00215">
    <property type="entry name" value="OMPdecase"/>
    <property type="match status" value="1"/>
</dbReference>
<dbReference type="SMART" id="SM00934">
    <property type="entry name" value="OMPdecase"/>
    <property type="match status" value="1"/>
</dbReference>
<dbReference type="SUPFAM" id="SSF51366">
    <property type="entry name" value="Ribulose-phoshate binding barrel"/>
    <property type="match status" value="1"/>
</dbReference>
<dbReference type="PROSITE" id="PS00156">
    <property type="entry name" value="OMPDECASE"/>
    <property type="match status" value="1"/>
</dbReference>